<evidence type="ECO:0000255" key="1">
    <source>
        <dbReference type="HAMAP-Rule" id="MF_01506"/>
    </source>
</evidence>
<evidence type="ECO:0000256" key="2">
    <source>
        <dbReference type="SAM" id="MobiDB-lite"/>
    </source>
</evidence>
<proteinExistence type="inferred from homology"/>
<feature type="chain" id="PRO_0000315208" description="Protein Tlp homolog">
    <location>
        <begin position="1"/>
        <end position="75"/>
    </location>
</feature>
<feature type="region of interest" description="Disordered" evidence="2">
    <location>
        <begin position="53"/>
        <end position="75"/>
    </location>
</feature>
<organism>
    <name type="scientific">Clostridium botulinum (strain Hall / ATCC 3502 / NCTC 13319 / Type A)</name>
    <dbReference type="NCBI Taxonomy" id="441771"/>
    <lineage>
        <taxon>Bacteria</taxon>
        <taxon>Bacillati</taxon>
        <taxon>Bacillota</taxon>
        <taxon>Clostridia</taxon>
        <taxon>Eubacteriales</taxon>
        <taxon>Clostridiaceae</taxon>
        <taxon>Clostridium</taxon>
    </lineage>
</organism>
<reference key="1">
    <citation type="journal article" date="2007" name="Genome Res.">
        <title>Genome sequence of a proteolytic (Group I) Clostridium botulinum strain Hall A and comparative analysis of the clostridial genomes.</title>
        <authorList>
            <person name="Sebaihia M."/>
            <person name="Peck M.W."/>
            <person name="Minton N.P."/>
            <person name="Thomson N.R."/>
            <person name="Holden M.T.G."/>
            <person name="Mitchell W.J."/>
            <person name="Carter A.T."/>
            <person name="Bentley S.D."/>
            <person name="Mason D.R."/>
            <person name="Crossman L."/>
            <person name="Paul C.J."/>
            <person name="Ivens A."/>
            <person name="Wells-Bennik M.H.J."/>
            <person name="Davis I.J."/>
            <person name="Cerdeno-Tarraga A.M."/>
            <person name="Churcher C."/>
            <person name="Quail M.A."/>
            <person name="Chillingworth T."/>
            <person name="Feltwell T."/>
            <person name="Fraser A."/>
            <person name="Goodhead I."/>
            <person name="Hance Z."/>
            <person name="Jagels K."/>
            <person name="Larke N."/>
            <person name="Maddison M."/>
            <person name="Moule S."/>
            <person name="Mungall K."/>
            <person name="Norbertczak H."/>
            <person name="Rabbinowitsch E."/>
            <person name="Sanders M."/>
            <person name="Simmonds M."/>
            <person name="White B."/>
            <person name="Whithead S."/>
            <person name="Parkhill J."/>
        </authorList>
    </citation>
    <scope>NUCLEOTIDE SEQUENCE [LARGE SCALE GENOMIC DNA]</scope>
    <source>
        <strain>Hall / ATCC 3502 / NCTC 13319 / Type A</strain>
    </source>
</reference>
<reference key="2">
    <citation type="journal article" date="2007" name="PLoS ONE">
        <title>Analysis of the neurotoxin complex genes in Clostridium botulinum A1-A4 and B1 strains: BoNT/A3, /Ba4 and /B1 clusters are located within plasmids.</title>
        <authorList>
            <person name="Smith T.J."/>
            <person name="Hill K.K."/>
            <person name="Foley B.T."/>
            <person name="Detter J.C."/>
            <person name="Munk A.C."/>
            <person name="Bruce D.C."/>
            <person name="Doggett N.A."/>
            <person name="Smith L.A."/>
            <person name="Marks J.D."/>
            <person name="Xie G."/>
            <person name="Brettin T.S."/>
        </authorList>
    </citation>
    <scope>NUCLEOTIDE SEQUENCE [LARGE SCALE GENOMIC DNA]</scope>
    <source>
        <strain>Hall / ATCC 3502 / NCTC 13319 / Type A</strain>
    </source>
</reference>
<gene>
    <name evidence="1" type="primary">tlp</name>
    <name type="ordered locus">CBO1034</name>
    <name type="ordered locus">CLC_1087</name>
</gene>
<protein>
    <recommendedName>
        <fullName evidence="1">Protein Tlp homolog</fullName>
    </recommendedName>
</protein>
<accession>A5I0M6</accession>
<accession>A7G2D9</accession>
<dbReference type="EMBL" id="CP000727">
    <property type="protein sequence ID" value="ABS36622.1"/>
    <property type="molecule type" value="Genomic_DNA"/>
</dbReference>
<dbReference type="EMBL" id="AM412317">
    <property type="protein sequence ID" value="CAL82587.1"/>
    <property type="molecule type" value="Genomic_DNA"/>
</dbReference>
<dbReference type="RefSeq" id="WP_011948709.1">
    <property type="nucleotide sequence ID" value="NC_009698.1"/>
</dbReference>
<dbReference type="RefSeq" id="YP_001253565.1">
    <property type="nucleotide sequence ID" value="NC_009495.1"/>
</dbReference>
<dbReference type="RefSeq" id="YP_001386954.1">
    <property type="nucleotide sequence ID" value="NC_009698.1"/>
</dbReference>
<dbReference type="SMR" id="A5I0M6"/>
<dbReference type="GeneID" id="5185289"/>
<dbReference type="KEGG" id="cbh:CLC_1087"/>
<dbReference type="KEGG" id="cbo:CBO1034"/>
<dbReference type="PATRIC" id="fig|413999.7.peg.1029"/>
<dbReference type="HOGENOM" id="CLU_178266_1_1_9"/>
<dbReference type="PRO" id="PR:A5I0M6"/>
<dbReference type="Proteomes" id="UP000001986">
    <property type="component" value="Chromosome"/>
</dbReference>
<dbReference type="HAMAP" id="MF_01506">
    <property type="entry name" value="Tlp"/>
    <property type="match status" value="1"/>
</dbReference>
<dbReference type="InterPro" id="IPR017524">
    <property type="entry name" value="SASP_thioredoxin-like"/>
</dbReference>
<dbReference type="NCBIfam" id="TIGR03090">
    <property type="entry name" value="SASP_tlp"/>
    <property type="match status" value="1"/>
</dbReference>
<dbReference type="Pfam" id="PF19824">
    <property type="entry name" value="Tlp"/>
    <property type="match status" value="1"/>
</dbReference>
<name>TLP_CLOBH</name>
<comment type="similarity">
    <text evidence="1">Belongs to the Tlp family.</text>
</comment>
<sequence length="75" mass="8976">MKNKPDDRRDNVDKIQYNITKTIQNCELADEMIAKTDDEKTKKTLIEKNERRREALDGMREEIKDEARDKKNGYM</sequence>
<keyword id="KW-1185">Reference proteome</keyword>